<gene>
    <name evidence="1" type="primary">rpsR</name>
    <name type="ordered locus">Bpet3055</name>
</gene>
<organism>
    <name type="scientific">Bordetella petrii (strain ATCC BAA-461 / DSM 12804 / CCUG 43448)</name>
    <dbReference type="NCBI Taxonomy" id="340100"/>
    <lineage>
        <taxon>Bacteria</taxon>
        <taxon>Pseudomonadati</taxon>
        <taxon>Pseudomonadota</taxon>
        <taxon>Betaproteobacteria</taxon>
        <taxon>Burkholderiales</taxon>
        <taxon>Alcaligenaceae</taxon>
        <taxon>Bordetella</taxon>
    </lineage>
</organism>
<name>RS18_BORPD</name>
<keyword id="KW-0687">Ribonucleoprotein</keyword>
<keyword id="KW-0689">Ribosomal protein</keyword>
<keyword id="KW-0694">RNA-binding</keyword>
<keyword id="KW-0699">rRNA-binding</keyword>
<accession>A9IT96</accession>
<protein>
    <recommendedName>
        <fullName evidence="1">Small ribosomal subunit protein bS18</fullName>
    </recommendedName>
    <alternativeName>
        <fullName evidence="2">30S ribosomal protein S18</fullName>
    </alternativeName>
</protein>
<reference key="1">
    <citation type="journal article" date="2008" name="BMC Genomics">
        <title>The missing link: Bordetella petrii is endowed with both the metabolic versatility of environmental bacteria and virulence traits of pathogenic Bordetellae.</title>
        <authorList>
            <person name="Gross R."/>
            <person name="Guzman C.A."/>
            <person name="Sebaihia M."/>
            <person name="Martin dos Santos V.A.P."/>
            <person name="Pieper D.H."/>
            <person name="Koebnik R."/>
            <person name="Lechner M."/>
            <person name="Bartels D."/>
            <person name="Buhrmester J."/>
            <person name="Choudhuri J.V."/>
            <person name="Ebensen T."/>
            <person name="Gaigalat L."/>
            <person name="Herrmann S."/>
            <person name="Khachane A.N."/>
            <person name="Larisch C."/>
            <person name="Link S."/>
            <person name="Linke B."/>
            <person name="Meyer F."/>
            <person name="Mormann S."/>
            <person name="Nakunst D."/>
            <person name="Rueckert C."/>
            <person name="Schneiker-Bekel S."/>
            <person name="Schulze K."/>
            <person name="Voerholter F.-J."/>
            <person name="Yevsa T."/>
            <person name="Engle J.T."/>
            <person name="Goldman W.E."/>
            <person name="Puehler A."/>
            <person name="Goebel U.B."/>
            <person name="Goesmann A."/>
            <person name="Bloecker H."/>
            <person name="Kaiser O."/>
            <person name="Martinez-Arias R."/>
        </authorList>
    </citation>
    <scope>NUCLEOTIDE SEQUENCE [LARGE SCALE GENOMIC DNA]</scope>
    <source>
        <strain>ATCC BAA-461 / DSM 12804 / CCUG 43448</strain>
    </source>
</reference>
<evidence type="ECO:0000255" key="1">
    <source>
        <dbReference type="HAMAP-Rule" id="MF_00270"/>
    </source>
</evidence>
<evidence type="ECO:0000305" key="2"/>
<sequence>MAFFGKRKEKRKFTQQNPLFKRRKFCRFTAAGVEEIDYKDLDTLRDFVQENGKIIPARLTGTKAHYQRQLDTAIKRARFLALLPYTDNHN</sequence>
<feature type="chain" id="PRO_1000114400" description="Small ribosomal subunit protein bS18">
    <location>
        <begin position="1"/>
        <end position="90"/>
    </location>
</feature>
<comment type="function">
    <text evidence="1">Binds as a heterodimer with protein bS6 to the central domain of the 16S rRNA, where it helps stabilize the platform of the 30S subunit.</text>
</comment>
<comment type="subunit">
    <text evidence="1">Part of the 30S ribosomal subunit. Forms a tight heterodimer with protein bS6.</text>
</comment>
<comment type="similarity">
    <text evidence="1">Belongs to the bacterial ribosomal protein bS18 family.</text>
</comment>
<proteinExistence type="inferred from homology"/>
<dbReference type="EMBL" id="AM902716">
    <property type="protein sequence ID" value="CAP43397.1"/>
    <property type="molecule type" value="Genomic_DNA"/>
</dbReference>
<dbReference type="SMR" id="A9IT96"/>
<dbReference type="STRING" id="94624.Bpet3055"/>
<dbReference type="KEGG" id="bpt:Bpet3055"/>
<dbReference type="eggNOG" id="COG0238">
    <property type="taxonomic scope" value="Bacteria"/>
</dbReference>
<dbReference type="Proteomes" id="UP000001225">
    <property type="component" value="Chromosome"/>
</dbReference>
<dbReference type="GO" id="GO:0022627">
    <property type="term" value="C:cytosolic small ribosomal subunit"/>
    <property type="evidence" value="ECO:0007669"/>
    <property type="project" value="TreeGrafter"/>
</dbReference>
<dbReference type="GO" id="GO:0070181">
    <property type="term" value="F:small ribosomal subunit rRNA binding"/>
    <property type="evidence" value="ECO:0007669"/>
    <property type="project" value="TreeGrafter"/>
</dbReference>
<dbReference type="GO" id="GO:0003735">
    <property type="term" value="F:structural constituent of ribosome"/>
    <property type="evidence" value="ECO:0007669"/>
    <property type="project" value="InterPro"/>
</dbReference>
<dbReference type="GO" id="GO:0006412">
    <property type="term" value="P:translation"/>
    <property type="evidence" value="ECO:0007669"/>
    <property type="project" value="UniProtKB-UniRule"/>
</dbReference>
<dbReference type="Gene3D" id="4.10.640.10">
    <property type="entry name" value="Ribosomal protein S18"/>
    <property type="match status" value="1"/>
</dbReference>
<dbReference type="HAMAP" id="MF_00270">
    <property type="entry name" value="Ribosomal_bS18"/>
    <property type="match status" value="1"/>
</dbReference>
<dbReference type="InterPro" id="IPR001648">
    <property type="entry name" value="Ribosomal_bS18"/>
</dbReference>
<dbReference type="InterPro" id="IPR018275">
    <property type="entry name" value="Ribosomal_bS18_CS"/>
</dbReference>
<dbReference type="InterPro" id="IPR036870">
    <property type="entry name" value="Ribosomal_bS18_sf"/>
</dbReference>
<dbReference type="NCBIfam" id="TIGR00165">
    <property type="entry name" value="S18"/>
    <property type="match status" value="1"/>
</dbReference>
<dbReference type="PANTHER" id="PTHR13479">
    <property type="entry name" value="30S RIBOSOMAL PROTEIN S18"/>
    <property type="match status" value="1"/>
</dbReference>
<dbReference type="PANTHER" id="PTHR13479:SF40">
    <property type="entry name" value="SMALL RIBOSOMAL SUBUNIT PROTEIN BS18M"/>
    <property type="match status" value="1"/>
</dbReference>
<dbReference type="Pfam" id="PF01084">
    <property type="entry name" value="Ribosomal_S18"/>
    <property type="match status" value="1"/>
</dbReference>
<dbReference type="PRINTS" id="PR00974">
    <property type="entry name" value="RIBOSOMALS18"/>
</dbReference>
<dbReference type="SUPFAM" id="SSF46911">
    <property type="entry name" value="Ribosomal protein S18"/>
    <property type="match status" value="1"/>
</dbReference>
<dbReference type="PROSITE" id="PS00057">
    <property type="entry name" value="RIBOSOMAL_S18"/>
    <property type="match status" value="1"/>
</dbReference>